<organism>
    <name type="scientific">Elusimicrobium minutum (strain Pei191)</name>
    <dbReference type="NCBI Taxonomy" id="445932"/>
    <lineage>
        <taxon>Bacteria</taxon>
        <taxon>Pseudomonadati</taxon>
        <taxon>Elusimicrobiota</taxon>
        <taxon>Elusimicrobia</taxon>
        <taxon>Elusimicrobiales</taxon>
        <taxon>Elusimicrobiaceae</taxon>
        <taxon>Elusimicrobium</taxon>
    </lineage>
</organism>
<proteinExistence type="inferred from homology"/>
<protein>
    <recommendedName>
        <fullName evidence="1">Lon protease</fullName>
        <ecNumber evidence="1">3.4.21.53</ecNumber>
    </recommendedName>
    <alternativeName>
        <fullName evidence="1">ATP-dependent protease La</fullName>
    </alternativeName>
</protein>
<accession>B2KCC0</accession>
<keyword id="KW-0067">ATP-binding</keyword>
<keyword id="KW-0963">Cytoplasm</keyword>
<keyword id="KW-0378">Hydrolase</keyword>
<keyword id="KW-0547">Nucleotide-binding</keyword>
<keyword id="KW-0645">Protease</keyword>
<keyword id="KW-1185">Reference proteome</keyword>
<keyword id="KW-0720">Serine protease</keyword>
<keyword id="KW-0346">Stress response</keyword>
<comment type="function">
    <text evidence="1">ATP-dependent serine protease that mediates the selective degradation of mutant and abnormal proteins as well as certain short-lived regulatory proteins. Required for cellular homeostasis and for survival from DNA damage and developmental changes induced by stress. Degrades polypeptides processively to yield small peptide fragments that are 5 to 10 amino acids long. Binds to DNA in a double-stranded, site-specific manner.</text>
</comment>
<comment type="catalytic activity">
    <reaction evidence="1">
        <text>Hydrolysis of proteins in presence of ATP.</text>
        <dbReference type="EC" id="3.4.21.53"/>
    </reaction>
</comment>
<comment type="subunit">
    <text evidence="1">Homohexamer. Organized in a ring with a central cavity.</text>
</comment>
<comment type="subcellular location">
    <subcellularLocation>
        <location evidence="1">Cytoplasm</location>
    </subcellularLocation>
</comment>
<comment type="induction">
    <text evidence="1">By heat shock.</text>
</comment>
<comment type="similarity">
    <text evidence="1">Belongs to the peptidase S16 family.</text>
</comment>
<reference key="1">
    <citation type="journal article" date="2009" name="Appl. Environ. Microbiol.">
        <title>Genomic analysis of 'Elusimicrobium minutum,' the first cultivated representative of the phylum 'Elusimicrobia' (formerly termite group 1).</title>
        <authorList>
            <person name="Herlemann D.P.R."/>
            <person name="Geissinger O."/>
            <person name="Ikeda-Ohtsubo W."/>
            <person name="Kunin V."/>
            <person name="Sun H."/>
            <person name="Lapidus A."/>
            <person name="Hugenholtz P."/>
            <person name="Brune A."/>
        </authorList>
    </citation>
    <scope>NUCLEOTIDE SEQUENCE [LARGE SCALE GENOMIC DNA]</scope>
    <source>
        <strain>Pei191</strain>
    </source>
</reference>
<feature type="chain" id="PRO_0000396562" description="Lon protease">
    <location>
        <begin position="1"/>
        <end position="830"/>
    </location>
</feature>
<feature type="domain" description="Lon N-terminal" evidence="3">
    <location>
        <begin position="20"/>
        <end position="215"/>
    </location>
</feature>
<feature type="domain" description="Lon proteolytic" evidence="2">
    <location>
        <begin position="602"/>
        <end position="781"/>
    </location>
</feature>
<feature type="region of interest" description="Disordered" evidence="4">
    <location>
        <begin position="784"/>
        <end position="830"/>
    </location>
</feature>
<feature type="compositionally biased region" description="Basic residues" evidence="4">
    <location>
        <begin position="802"/>
        <end position="830"/>
    </location>
</feature>
<feature type="active site" evidence="1">
    <location>
        <position position="687"/>
    </location>
</feature>
<feature type="active site" evidence="1">
    <location>
        <position position="730"/>
    </location>
</feature>
<feature type="binding site" evidence="1">
    <location>
        <begin position="367"/>
        <end position="374"/>
    </location>
    <ligand>
        <name>ATP</name>
        <dbReference type="ChEBI" id="CHEBI:30616"/>
    </ligand>
</feature>
<name>LON_ELUMP</name>
<dbReference type="EC" id="3.4.21.53" evidence="1"/>
<dbReference type="EMBL" id="CP001055">
    <property type="protein sequence ID" value="ACC98041.1"/>
    <property type="molecule type" value="Genomic_DNA"/>
</dbReference>
<dbReference type="RefSeq" id="WP_012414656.1">
    <property type="nucleotide sequence ID" value="NC_010644.1"/>
</dbReference>
<dbReference type="SMR" id="B2KCC0"/>
<dbReference type="STRING" id="445932.Emin_0485"/>
<dbReference type="MEROPS" id="S16.001"/>
<dbReference type="KEGG" id="emi:Emin_0485"/>
<dbReference type="HOGENOM" id="CLU_004109_4_3_0"/>
<dbReference type="OrthoDB" id="9803599at2"/>
<dbReference type="Proteomes" id="UP000001029">
    <property type="component" value="Chromosome"/>
</dbReference>
<dbReference type="GO" id="GO:0005737">
    <property type="term" value="C:cytoplasm"/>
    <property type="evidence" value="ECO:0007669"/>
    <property type="project" value="UniProtKB-SubCell"/>
</dbReference>
<dbReference type="GO" id="GO:0005524">
    <property type="term" value="F:ATP binding"/>
    <property type="evidence" value="ECO:0007669"/>
    <property type="project" value="UniProtKB-UniRule"/>
</dbReference>
<dbReference type="GO" id="GO:0016887">
    <property type="term" value="F:ATP hydrolysis activity"/>
    <property type="evidence" value="ECO:0007669"/>
    <property type="project" value="UniProtKB-UniRule"/>
</dbReference>
<dbReference type="GO" id="GO:0004176">
    <property type="term" value="F:ATP-dependent peptidase activity"/>
    <property type="evidence" value="ECO:0007669"/>
    <property type="project" value="UniProtKB-UniRule"/>
</dbReference>
<dbReference type="GO" id="GO:0043565">
    <property type="term" value="F:sequence-specific DNA binding"/>
    <property type="evidence" value="ECO:0007669"/>
    <property type="project" value="UniProtKB-UniRule"/>
</dbReference>
<dbReference type="GO" id="GO:0004252">
    <property type="term" value="F:serine-type endopeptidase activity"/>
    <property type="evidence" value="ECO:0007669"/>
    <property type="project" value="UniProtKB-UniRule"/>
</dbReference>
<dbReference type="GO" id="GO:0034605">
    <property type="term" value="P:cellular response to heat"/>
    <property type="evidence" value="ECO:0007669"/>
    <property type="project" value="UniProtKB-UniRule"/>
</dbReference>
<dbReference type="GO" id="GO:0006515">
    <property type="term" value="P:protein quality control for misfolded or incompletely synthesized proteins"/>
    <property type="evidence" value="ECO:0007669"/>
    <property type="project" value="UniProtKB-UniRule"/>
</dbReference>
<dbReference type="CDD" id="cd19500">
    <property type="entry name" value="RecA-like_Lon"/>
    <property type="match status" value="1"/>
</dbReference>
<dbReference type="FunFam" id="1.20.5.5270:FF:000002">
    <property type="entry name" value="Lon protease homolog"/>
    <property type="match status" value="1"/>
</dbReference>
<dbReference type="FunFam" id="3.40.50.300:FF:000382">
    <property type="entry name" value="Lon protease homolog 2, peroxisomal"/>
    <property type="match status" value="1"/>
</dbReference>
<dbReference type="Gene3D" id="1.10.8.60">
    <property type="match status" value="1"/>
</dbReference>
<dbReference type="Gene3D" id="1.20.5.5270">
    <property type="match status" value="1"/>
</dbReference>
<dbReference type="Gene3D" id="1.20.58.1480">
    <property type="match status" value="1"/>
</dbReference>
<dbReference type="Gene3D" id="3.30.230.10">
    <property type="match status" value="1"/>
</dbReference>
<dbReference type="Gene3D" id="2.30.130.40">
    <property type="entry name" value="LON domain-like"/>
    <property type="match status" value="1"/>
</dbReference>
<dbReference type="Gene3D" id="3.40.50.300">
    <property type="entry name" value="P-loop containing nucleotide triphosphate hydrolases"/>
    <property type="match status" value="1"/>
</dbReference>
<dbReference type="HAMAP" id="MF_01973">
    <property type="entry name" value="lon_bact"/>
    <property type="match status" value="1"/>
</dbReference>
<dbReference type="InterPro" id="IPR003593">
    <property type="entry name" value="AAA+_ATPase"/>
</dbReference>
<dbReference type="InterPro" id="IPR003959">
    <property type="entry name" value="ATPase_AAA_core"/>
</dbReference>
<dbReference type="InterPro" id="IPR027543">
    <property type="entry name" value="Lon_bac"/>
</dbReference>
<dbReference type="InterPro" id="IPR004815">
    <property type="entry name" value="Lon_bac/euk-typ"/>
</dbReference>
<dbReference type="InterPro" id="IPR054594">
    <property type="entry name" value="Lon_lid"/>
</dbReference>
<dbReference type="InterPro" id="IPR008269">
    <property type="entry name" value="Lon_proteolytic"/>
</dbReference>
<dbReference type="InterPro" id="IPR027065">
    <property type="entry name" value="Lon_Prtase"/>
</dbReference>
<dbReference type="InterPro" id="IPR003111">
    <property type="entry name" value="Lon_prtase_N"/>
</dbReference>
<dbReference type="InterPro" id="IPR046336">
    <property type="entry name" value="Lon_prtase_N_sf"/>
</dbReference>
<dbReference type="InterPro" id="IPR027417">
    <property type="entry name" value="P-loop_NTPase"/>
</dbReference>
<dbReference type="InterPro" id="IPR015947">
    <property type="entry name" value="PUA-like_sf"/>
</dbReference>
<dbReference type="InterPro" id="IPR020568">
    <property type="entry name" value="Ribosomal_Su5_D2-typ_SF"/>
</dbReference>
<dbReference type="InterPro" id="IPR014721">
    <property type="entry name" value="Ribsml_uS5_D2-typ_fold_subgr"/>
</dbReference>
<dbReference type="NCBIfam" id="TIGR00763">
    <property type="entry name" value="lon"/>
    <property type="match status" value="1"/>
</dbReference>
<dbReference type="NCBIfam" id="NF008053">
    <property type="entry name" value="PRK10787.1"/>
    <property type="match status" value="1"/>
</dbReference>
<dbReference type="PANTHER" id="PTHR10046">
    <property type="entry name" value="ATP DEPENDENT LON PROTEASE FAMILY MEMBER"/>
    <property type="match status" value="1"/>
</dbReference>
<dbReference type="Pfam" id="PF00004">
    <property type="entry name" value="AAA"/>
    <property type="match status" value="1"/>
</dbReference>
<dbReference type="Pfam" id="PF05362">
    <property type="entry name" value="Lon_C"/>
    <property type="match status" value="1"/>
</dbReference>
<dbReference type="Pfam" id="PF22667">
    <property type="entry name" value="Lon_lid"/>
    <property type="match status" value="1"/>
</dbReference>
<dbReference type="Pfam" id="PF02190">
    <property type="entry name" value="LON_substr_bdg"/>
    <property type="match status" value="1"/>
</dbReference>
<dbReference type="PIRSF" id="PIRSF001174">
    <property type="entry name" value="Lon_proteas"/>
    <property type="match status" value="1"/>
</dbReference>
<dbReference type="PRINTS" id="PR00830">
    <property type="entry name" value="ENDOLAPTASE"/>
</dbReference>
<dbReference type="SMART" id="SM00382">
    <property type="entry name" value="AAA"/>
    <property type="match status" value="1"/>
</dbReference>
<dbReference type="SMART" id="SM00464">
    <property type="entry name" value="LON"/>
    <property type="match status" value="1"/>
</dbReference>
<dbReference type="SUPFAM" id="SSF52540">
    <property type="entry name" value="P-loop containing nucleoside triphosphate hydrolases"/>
    <property type="match status" value="1"/>
</dbReference>
<dbReference type="SUPFAM" id="SSF88697">
    <property type="entry name" value="PUA domain-like"/>
    <property type="match status" value="1"/>
</dbReference>
<dbReference type="SUPFAM" id="SSF54211">
    <property type="entry name" value="Ribosomal protein S5 domain 2-like"/>
    <property type="match status" value="1"/>
</dbReference>
<dbReference type="PROSITE" id="PS51787">
    <property type="entry name" value="LON_N"/>
    <property type="match status" value="1"/>
</dbReference>
<dbReference type="PROSITE" id="PS51786">
    <property type="entry name" value="LON_PROTEOLYTIC"/>
    <property type="match status" value="1"/>
</dbReference>
<evidence type="ECO:0000255" key="1">
    <source>
        <dbReference type="HAMAP-Rule" id="MF_01973"/>
    </source>
</evidence>
<evidence type="ECO:0000255" key="2">
    <source>
        <dbReference type="PROSITE-ProRule" id="PRU01122"/>
    </source>
</evidence>
<evidence type="ECO:0000255" key="3">
    <source>
        <dbReference type="PROSITE-ProRule" id="PRU01123"/>
    </source>
</evidence>
<evidence type="ECO:0000256" key="4">
    <source>
        <dbReference type="SAM" id="MobiDB-lite"/>
    </source>
</evidence>
<gene>
    <name evidence="1" type="primary">lon</name>
    <name type="ordered locus">Emin_0485</name>
</gene>
<sequence>MIAENKDYVKPDVNTLPAVLPAVAIRDVVMFPGMSLPLSVSRSKSIAAINLALDSNKYVVAVAQKEAEVEDPKAEDIYRFGVLSEITQSLKMPDGSIKVFLQGIARVKIEHLDFNNIANSWFASVFYPADEKVSGPEVTALMRQLLDEFEEYATVSRRIAVEGVSFFRQIEDPSRLADTIASNIIVKTSDRQDVLEAVNPKDRLELLIKILANEVEIISLEEKIHSKVRAQIEKNQKEYYLNEQMKAIQKELSQKDDFQKEIDELRSKIKKNGLPKNAKESAEKELDRLAKMAPFSPESTVSRTYLDWLVNMPWNSSTNDILDLKKAKEVMDADHYGLDKPKERILEYLAVSKLTNSLKGPILCFAGPPGVGKTSLAKSIASAVGRKFVRMSLGGVRDESEIRGHRRTYIGSMPGRIIQGISKAKSNNPVFLLDEIDKMGSDWRGDPAAALLELLDPEQNKDFSDHYLDVPFDVSKVMFITTANSLSSIPVTLRDRLEIIDFSGYTEYEKEAIAQNHLIPRQMKEHGLKEGSLEIGLPAVKLIMRDYVREAGVRNFEREISTICRKAAKMYVENCGKTVTVTKDNLHDFLGVPRYTNFTTEENGVGISTGLAWTSVGGETLSIEASEISDGKGRIMLTGKLGDVMKESVHAALTYARSKGYGKGIDFNKTDFHIHFPEGAVPKDGPSAGTAVTTALISLLTKNPVKKNLAMTGEVTITGRVLPIGGVKEKFMAAYREGVKTILYPHTNEKDVSEVPEVIRKQLKLIPVKHMDEIVKIAFEKGEPKSSFKKSKTAPKKESAKKAAKSKKPAVKKPAVKKTKQVKKTAKKKK</sequence>